<keyword id="KW-1185">Reference proteome</keyword>
<keyword id="KW-0677">Repeat</keyword>
<keyword id="KW-0964">Secreted</keyword>
<keyword id="KW-0732">Signal</keyword>
<sequence length="206" mass="21403">MLVVLLTAALLVLSSAHGSDEEVIYEDSSSQLLDVEQQNQKHGQHHQKPPPASDENGDGDDSDDGDDDGSGDDGNRPERPPPHGGNHQRPPPGHHHGPPPSGGPQTSSQPGNPQGPPPQGGPQGPPQPGNPQGPPPQGGPQQRPPQPGKPQGPPPQGGPQGPPQPGNPQGPPPQGGHQQRPPQPRKPQDPAQDATHEQPSYLWFSS</sequence>
<gene>
    <name type="primary">Prpg1</name>
</gene>
<organism>
    <name type="scientific">Rattus norvegicus</name>
    <name type="common">Rat</name>
    <dbReference type="NCBI Taxonomy" id="10116"/>
    <lineage>
        <taxon>Eukaryota</taxon>
        <taxon>Metazoa</taxon>
        <taxon>Chordata</taxon>
        <taxon>Craniata</taxon>
        <taxon>Vertebrata</taxon>
        <taxon>Euteleostomi</taxon>
        <taxon>Mammalia</taxon>
        <taxon>Eutheria</taxon>
        <taxon>Euarchontoglires</taxon>
        <taxon>Glires</taxon>
        <taxon>Rodentia</taxon>
        <taxon>Myomorpha</taxon>
        <taxon>Muroidea</taxon>
        <taxon>Muridae</taxon>
        <taxon>Murinae</taxon>
        <taxon>Rattus</taxon>
    </lineage>
</organism>
<reference key="1">
    <citation type="journal article" date="1984" name="J. Biol. Chem.">
        <title>Nucleotide sequence analysis of a proline-rich protein cDNA and peptide homologies of rat and human proline-rich proteins.</title>
        <authorList>
            <person name="Ziemer M.A."/>
            <person name="Swain W.F."/>
            <person name="Rutter W.J."/>
            <person name="Clements S."/>
            <person name="Ann D.K."/>
            <person name="Carlson D.M."/>
        </authorList>
    </citation>
    <scope>NUCLEOTIDE SEQUENCE [MRNA]</scope>
    <source>
        <tissue>Parotid gland</tissue>
    </source>
</reference>
<reference key="2">
    <citation type="journal article" date="1985" name="J. Biol. Chem.">
        <title>Novel multigene families encoding highly repetitive peptide sequences. Sequence analyses of rat and mouse proline-rich protein cDNAs.</title>
        <authorList>
            <person name="Clements S."/>
            <person name="Mehansho H."/>
            <person name="Carlson D.M."/>
        </authorList>
    </citation>
    <scope>NUCLEOTIDE SEQUENCE [MRNA] OF 1-23</scope>
    <source>
        <tissue>Parotid gland</tissue>
    </source>
</reference>
<dbReference type="EMBL" id="K02247">
    <property type="protein sequence ID" value="AAA41949.1"/>
    <property type="molecule type" value="mRNA"/>
</dbReference>
<dbReference type="EMBL" id="M11898">
    <property type="protein sequence ID" value="AAA41958.1"/>
    <property type="molecule type" value="mRNA"/>
</dbReference>
<dbReference type="PIR" id="A03296">
    <property type="entry name" value="PIRT3"/>
</dbReference>
<dbReference type="UCSC" id="RGD:628796">
    <property type="organism name" value="rat"/>
</dbReference>
<dbReference type="AGR" id="RGD:628796"/>
<dbReference type="RGD" id="628796">
    <property type="gene designation" value="Prpg1"/>
</dbReference>
<dbReference type="eggNOG" id="ENOG502TF4Q">
    <property type="taxonomic scope" value="Eukaryota"/>
</dbReference>
<dbReference type="InParanoid" id="P04474"/>
<dbReference type="PRO" id="PR:P04474"/>
<dbReference type="Proteomes" id="UP000002494">
    <property type="component" value="Unplaced"/>
</dbReference>
<dbReference type="GO" id="GO:0005576">
    <property type="term" value="C:extracellular region"/>
    <property type="evidence" value="ECO:0007669"/>
    <property type="project" value="UniProtKB-SubCell"/>
</dbReference>
<dbReference type="InterPro" id="IPR026086">
    <property type="entry name" value="Pro-rich"/>
</dbReference>
<dbReference type="PANTHER" id="PTHR23203:SF20">
    <property type="entry name" value="BASIC SALIVARY PROLINE-RICH PROTEIN 1-RELATED"/>
    <property type="match status" value="1"/>
</dbReference>
<dbReference type="PANTHER" id="PTHR23203">
    <property type="entry name" value="PROLINE-RICH PROTEIN"/>
    <property type="match status" value="1"/>
</dbReference>
<dbReference type="Pfam" id="PF15240">
    <property type="entry name" value="Pro-rich"/>
    <property type="match status" value="2"/>
</dbReference>
<dbReference type="SMART" id="SM01412">
    <property type="entry name" value="Pro-rich"/>
    <property type="match status" value="1"/>
</dbReference>
<accession>P04474</accession>
<name>PRP3_RAT</name>
<feature type="signal peptide" evidence="1">
    <location>
        <begin position="1"/>
        <end position="13"/>
    </location>
</feature>
<feature type="chain" id="PRO_0000022135" description="Acidic proline-rich protein PRP33">
    <location>
        <begin position="14"/>
        <end position="206"/>
    </location>
</feature>
<feature type="repeat" description="1">
    <location>
        <begin position="80"/>
        <end position="97"/>
    </location>
</feature>
<feature type="repeat" description="2">
    <location>
        <begin position="98"/>
        <end position="115"/>
    </location>
</feature>
<feature type="repeat" description="3">
    <location>
        <begin position="116"/>
        <end position="133"/>
    </location>
</feature>
<feature type="repeat" description="4">
    <location>
        <begin position="134"/>
        <end position="152"/>
    </location>
</feature>
<feature type="repeat" description="5">
    <location>
        <begin position="153"/>
        <end position="170"/>
    </location>
</feature>
<feature type="repeat" description="6">
    <location>
        <begin position="171"/>
        <end position="189"/>
    </location>
</feature>
<feature type="region of interest" description="Disordered" evidence="2">
    <location>
        <begin position="15"/>
        <end position="206"/>
    </location>
</feature>
<feature type="region of interest" description="6 X 18 AA approximate tandem repeats">
    <location>
        <begin position="80"/>
        <end position="189"/>
    </location>
</feature>
<feature type="compositionally biased region" description="Acidic residues" evidence="2">
    <location>
        <begin position="55"/>
        <end position="71"/>
    </location>
</feature>
<feature type="compositionally biased region" description="Low complexity" evidence="2">
    <location>
        <begin position="103"/>
        <end position="112"/>
    </location>
</feature>
<feature type="compositionally biased region" description="Pro residues" evidence="2">
    <location>
        <begin position="113"/>
        <end position="174"/>
    </location>
</feature>
<evidence type="ECO:0000255" key="1"/>
<evidence type="ECO:0000256" key="2">
    <source>
        <dbReference type="SAM" id="MobiDB-lite"/>
    </source>
</evidence>
<evidence type="ECO:0000305" key="3"/>
<protein>
    <recommendedName>
        <fullName>Acidic proline-rich protein PRP33</fullName>
    </recommendedName>
    <alternativeName>
        <fullName>Proline-rich proteoglycan 1</fullName>
    </alternativeName>
</protein>
<comment type="function">
    <text>May protect teeth by binding to tannins.</text>
</comment>
<comment type="subcellular location">
    <subcellularLocation>
        <location evidence="3">Secreted</location>
    </subcellularLocation>
</comment>
<proteinExistence type="evidence at transcript level"/>